<organism>
    <name type="scientific">Stutzerimonas stutzeri (strain A1501)</name>
    <name type="common">Pseudomonas stutzeri</name>
    <dbReference type="NCBI Taxonomy" id="379731"/>
    <lineage>
        <taxon>Bacteria</taxon>
        <taxon>Pseudomonadati</taxon>
        <taxon>Pseudomonadota</taxon>
        <taxon>Gammaproteobacteria</taxon>
        <taxon>Pseudomonadales</taxon>
        <taxon>Pseudomonadaceae</taxon>
        <taxon>Stutzerimonas</taxon>
    </lineage>
</organism>
<evidence type="ECO:0000255" key="1">
    <source>
        <dbReference type="HAMAP-Rule" id="MF_00711"/>
    </source>
</evidence>
<dbReference type="EC" id="1.4.4.2" evidence="1"/>
<dbReference type="EMBL" id="CP000304">
    <property type="protein sequence ID" value="ABP81685.1"/>
    <property type="molecule type" value="Genomic_DNA"/>
</dbReference>
<dbReference type="RefSeq" id="WP_011915065.1">
    <property type="nucleotide sequence ID" value="NC_009434.1"/>
</dbReference>
<dbReference type="SMR" id="A4VRT4"/>
<dbReference type="KEGG" id="psa:PST_4062"/>
<dbReference type="eggNOG" id="COG0403">
    <property type="taxonomic scope" value="Bacteria"/>
</dbReference>
<dbReference type="eggNOG" id="COG1003">
    <property type="taxonomic scope" value="Bacteria"/>
</dbReference>
<dbReference type="HOGENOM" id="CLU_004620_3_2_6"/>
<dbReference type="Proteomes" id="UP000000233">
    <property type="component" value="Chromosome"/>
</dbReference>
<dbReference type="GO" id="GO:0005829">
    <property type="term" value="C:cytosol"/>
    <property type="evidence" value="ECO:0007669"/>
    <property type="project" value="TreeGrafter"/>
</dbReference>
<dbReference type="GO" id="GO:0005960">
    <property type="term" value="C:glycine cleavage complex"/>
    <property type="evidence" value="ECO:0007669"/>
    <property type="project" value="TreeGrafter"/>
</dbReference>
<dbReference type="GO" id="GO:0016594">
    <property type="term" value="F:glycine binding"/>
    <property type="evidence" value="ECO:0007669"/>
    <property type="project" value="TreeGrafter"/>
</dbReference>
<dbReference type="GO" id="GO:0004375">
    <property type="term" value="F:glycine dehydrogenase (decarboxylating) activity"/>
    <property type="evidence" value="ECO:0007669"/>
    <property type="project" value="UniProtKB-EC"/>
</dbReference>
<dbReference type="GO" id="GO:0030170">
    <property type="term" value="F:pyridoxal phosphate binding"/>
    <property type="evidence" value="ECO:0007669"/>
    <property type="project" value="TreeGrafter"/>
</dbReference>
<dbReference type="GO" id="GO:0019464">
    <property type="term" value="P:glycine decarboxylation via glycine cleavage system"/>
    <property type="evidence" value="ECO:0007669"/>
    <property type="project" value="UniProtKB-UniRule"/>
</dbReference>
<dbReference type="CDD" id="cd00613">
    <property type="entry name" value="GDC-P"/>
    <property type="match status" value="2"/>
</dbReference>
<dbReference type="FunFam" id="3.40.640.10:FF:000005">
    <property type="entry name" value="Glycine dehydrogenase (decarboxylating), mitochondrial"/>
    <property type="match status" value="1"/>
</dbReference>
<dbReference type="FunFam" id="3.90.1150.10:FF:000007">
    <property type="entry name" value="Glycine dehydrogenase (decarboxylating), mitochondrial"/>
    <property type="match status" value="1"/>
</dbReference>
<dbReference type="FunFam" id="3.40.640.10:FF:000007">
    <property type="entry name" value="glycine dehydrogenase (Decarboxylating), mitochondrial"/>
    <property type="match status" value="1"/>
</dbReference>
<dbReference type="Gene3D" id="3.90.1150.10">
    <property type="entry name" value="Aspartate Aminotransferase, domain 1"/>
    <property type="match status" value="1"/>
</dbReference>
<dbReference type="Gene3D" id="3.40.640.10">
    <property type="entry name" value="Type I PLP-dependent aspartate aminotransferase-like (Major domain)"/>
    <property type="match status" value="2"/>
</dbReference>
<dbReference type="HAMAP" id="MF_00711">
    <property type="entry name" value="GcvP"/>
    <property type="match status" value="1"/>
</dbReference>
<dbReference type="InterPro" id="IPR003437">
    <property type="entry name" value="GcvP"/>
</dbReference>
<dbReference type="InterPro" id="IPR049316">
    <property type="entry name" value="GDC-P_C"/>
</dbReference>
<dbReference type="InterPro" id="IPR049315">
    <property type="entry name" value="GDC-P_N"/>
</dbReference>
<dbReference type="InterPro" id="IPR020581">
    <property type="entry name" value="GDC_P"/>
</dbReference>
<dbReference type="InterPro" id="IPR015424">
    <property type="entry name" value="PyrdxlP-dep_Trfase"/>
</dbReference>
<dbReference type="InterPro" id="IPR015421">
    <property type="entry name" value="PyrdxlP-dep_Trfase_major"/>
</dbReference>
<dbReference type="InterPro" id="IPR015422">
    <property type="entry name" value="PyrdxlP-dep_Trfase_small"/>
</dbReference>
<dbReference type="NCBIfam" id="TIGR00461">
    <property type="entry name" value="gcvP"/>
    <property type="match status" value="1"/>
</dbReference>
<dbReference type="PANTHER" id="PTHR11773:SF13">
    <property type="entry name" value="GLYCINE DEHYDROGENASE (DECARBOXYLATING)"/>
    <property type="match status" value="1"/>
</dbReference>
<dbReference type="PANTHER" id="PTHR11773">
    <property type="entry name" value="GLYCINE DEHYDROGENASE, DECARBOXYLATING"/>
    <property type="match status" value="1"/>
</dbReference>
<dbReference type="Pfam" id="PF21478">
    <property type="entry name" value="GcvP2_C"/>
    <property type="match status" value="1"/>
</dbReference>
<dbReference type="Pfam" id="PF02347">
    <property type="entry name" value="GDC-P"/>
    <property type="match status" value="2"/>
</dbReference>
<dbReference type="SUPFAM" id="SSF53383">
    <property type="entry name" value="PLP-dependent transferases"/>
    <property type="match status" value="2"/>
</dbReference>
<feature type="chain" id="PRO_1000045595" description="Glycine dehydrogenase (decarboxylating)">
    <location>
        <begin position="1"/>
        <end position="958"/>
    </location>
</feature>
<feature type="modified residue" description="N6-(pyridoxal phosphate)lysine" evidence="1">
    <location>
        <position position="707"/>
    </location>
</feature>
<proteinExistence type="inferred from homology"/>
<protein>
    <recommendedName>
        <fullName evidence="1">Glycine dehydrogenase (decarboxylating)</fullName>
        <ecNumber evidence="1">1.4.4.2</ecNumber>
    </recommendedName>
    <alternativeName>
        <fullName evidence="1">Glycine cleavage system P-protein</fullName>
    </alternativeName>
    <alternativeName>
        <fullName evidence="1">Glycine decarboxylase</fullName>
    </alternativeName>
    <alternativeName>
        <fullName evidence="1">Glycine dehydrogenase (aminomethyl-transferring)</fullName>
    </alternativeName>
</protein>
<sequence>MPYMPSLSQLQQTDAFLRRHLGPDQGEQQAMLDALGLASREQLIEQTVPPAIRLQGELNLPPALDEQAALAKLKGYAEQNQLWTSLIGMGYHGTITPPVILRNVLENPGWYTAYTPYQPEIAQGRLEALLNYQQMIIDLTGLDLANASLLDEATAAAEAMTLARRMAKSKSNRFFVDENCHPQTLSVVQTRAEAFGFELVVGTLDDLAGHEVFGALLQYPDTHGEIRDLRPAIEQLHAQQALACVAADLLSLLLLTPPGELGADVVLGSTQRFGVPMGYGGPHAAYFASRDEFKRGMPGRIIGVSKDARGNTALRMALQTREQHIRREKANSNICTAQVLLANIAGFYAVYHGPQGLKRIAQRVHRLTAILAAGLEQKGIVRLNRHFFDTLTLEVGGAQTAIIESAEAAQINLRILGRGRLGVSLDETCDERTVEQLLAIFLGADHGLDVAALDAGELAAGIPAGLQRDSGYLEHPVFNSHHSETEMLRYLKQLENKDLALNQAMIPLGSCTMKLNATSEMIPITWAEFANLHPFVPRGQAQGYRLMIEELEAWLCAITGFDAISMQPNSGAQGEYAGLVAIRKYHESRGEGQRDICLIPSSAHGTNPASAQMVSMRVVIVECDKGGNVDLEDLKRKAAEAGDRLSCLMITYPSTHGVYEENVREICAAIHAQGGQVYMDGANLNAQVGLARPADIGADVSHMNLHKTFCIPHGGGGPGMGPIGVKAHLAPFVANHPVVELEGPQPGNGAVSAAPWGSASILPISWMYIAMMGPQLRDATEVAILGANYLANRLGGAFPVLYSGRNGRVAHECILDLRPLKAASGISEEDVAKRLMDYGFHAPTMSFPVPGTLMIEPTESESKAELDRFVEAMLSIRAEIAKVQDGEWPADNNPLVRAPHTLADVIGEWDRPYSIAEAVTPSAHARAHKYWPAVNRVDNVYGDRNLFCACVPVDAYRD</sequence>
<name>GCSP_STUS1</name>
<gene>
    <name evidence="1" type="primary">gcvP</name>
    <name type="ordered locus">PST_4062</name>
</gene>
<keyword id="KW-0560">Oxidoreductase</keyword>
<keyword id="KW-0663">Pyridoxal phosphate</keyword>
<keyword id="KW-1185">Reference proteome</keyword>
<comment type="function">
    <text evidence="1">The glycine cleavage system catalyzes the degradation of glycine. The P protein binds the alpha-amino group of glycine through its pyridoxal phosphate cofactor; CO(2) is released and the remaining methylamine moiety is then transferred to the lipoamide cofactor of the H protein.</text>
</comment>
<comment type="catalytic activity">
    <reaction evidence="1">
        <text>N(6)-[(R)-lipoyl]-L-lysyl-[glycine-cleavage complex H protein] + glycine + H(+) = N(6)-[(R)-S(8)-aminomethyldihydrolipoyl]-L-lysyl-[glycine-cleavage complex H protein] + CO2</text>
        <dbReference type="Rhea" id="RHEA:24304"/>
        <dbReference type="Rhea" id="RHEA-COMP:10494"/>
        <dbReference type="Rhea" id="RHEA-COMP:10495"/>
        <dbReference type="ChEBI" id="CHEBI:15378"/>
        <dbReference type="ChEBI" id="CHEBI:16526"/>
        <dbReference type="ChEBI" id="CHEBI:57305"/>
        <dbReference type="ChEBI" id="CHEBI:83099"/>
        <dbReference type="ChEBI" id="CHEBI:83143"/>
        <dbReference type="EC" id="1.4.4.2"/>
    </reaction>
</comment>
<comment type="cofactor">
    <cofactor evidence="1">
        <name>pyridoxal 5'-phosphate</name>
        <dbReference type="ChEBI" id="CHEBI:597326"/>
    </cofactor>
</comment>
<comment type="subunit">
    <text evidence="1">The glycine cleavage system is composed of four proteins: P, T, L and H.</text>
</comment>
<comment type="similarity">
    <text evidence="1">Belongs to the GcvP family.</text>
</comment>
<reference key="1">
    <citation type="journal article" date="2008" name="Proc. Natl. Acad. Sci. U.S.A.">
        <title>Nitrogen fixation island and rhizosphere competence traits in the genome of root-associated Pseudomonas stutzeri A1501.</title>
        <authorList>
            <person name="Yan Y."/>
            <person name="Yang J."/>
            <person name="Dou Y."/>
            <person name="Chen M."/>
            <person name="Ping S."/>
            <person name="Peng J."/>
            <person name="Lu W."/>
            <person name="Zhang W."/>
            <person name="Yao Z."/>
            <person name="Li H."/>
            <person name="Liu W."/>
            <person name="He S."/>
            <person name="Geng L."/>
            <person name="Zhang X."/>
            <person name="Yang F."/>
            <person name="Yu H."/>
            <person name="Zhan Y."/>
            <person name="Li D."/>
            <person name="Lin Z."/>
            <person name="Wang Y."/>
            <person name="Elmerich C."/>
            <person name="Lin M."/>
            <person name="Jin Q."/>
        </authorList>
    </citation>
    <scope>NUCLEOTIDE SEQUENCE [LARGE SCALE GENOMIC DNA]</scope>
    <source>
        <strain>A1501</strain>
    </source>
</reference>
<accession>A4VRT4</accession>